<keyword id="KW-0732">Signal</keyword>
<keyword id="KW-0926">Vacuole</keyword>
<sequence>MASLRFSVTFPALFSLLLSLWVVDACTSRKLISNNEQEGQNISHLFKDGEFEDPTMYMFFKISDLKLGTKLPIYFNKNDLRKVPPLLTRQEADLIPFSESNLDFLLNHFSISKDSPQGEAMKETLQRCDFKAIEGEYKFCGTSLESMLDLAKKTIASNADLKVMTTKVMVPDQNRISYALHNYTFAEVPKELDGIKVLGCHRMPYPYVVYYCHGHKSGTKVFEVNLMSDDGIQLVVGPAVCHMDTSMWNADHVAFKVLKIEPRSAPVCHFFPLDNIVWVSK</sequence>
<evidence type="ECO:0000255" key="1"/>
<evidence type="ECO:0000255" key="2">
    <source>
        <dbReference type="PROSITE-ProRule" id="PRU00604"/>
    </source>
</evidence>
<evidence type="ECO:0000269" key="3">
    <source>
    </source>
</evidence>
<evidence type="ECO:0000269" key="4">
    <source>
    </source>
</evidence>
<evidence type="ECO:0000303" key="5">
    <source>
    </source>
</evidence>
<evidence type="ECO:0000312" key="6">
    <source>
        <dbReference type="EMBL" id="ACO54862.1"/>
    </source>
</evidence>
<evidence type="ECO:0000312" key="7">
    <source>
        <dbReference type="EMBL" id="CDX77253.1"/>
    </source>
</evidence>
<accession>D2CZZ9</accession>
<protein>
    <recommendedName>
        <fullName evidence="5">BURP domain-containing protein BNM2C</fullName>
    </recommendedName>
</protein>
<proteinExistence type="evidence at transcript level"/>
<name>BNM2C_BRANA</name>
<feature type="signal peptide" evidence="1">
    <location>
        <begin position="1"/>
        <end position="25"/>
    </location>
</feature>
<feature type="chain" id="PRO_5005908045" description="BURP domain-containing protein BNM2C">
    <location>
        <begin position="26"/>
        <end position="281"/>
    </location>
</feature>
<feature type="domain" description="BURP" evidence="2">
    <location>
        <begin position="59"/>
        <end position="281"/>
    </location>
</feature>
<comment type="subcellular location">
    <subcellularLocation>
        <location evidence="3">Protein storage vacuole</location>
    </subcellularLocation>
</comment>
<comment type="tissue specificity">
    <text evidence="3">Expressed in the radicle of germinating seeds 2 days post-imbibition (DPI) and in roots of 30-DPI young plants. Expressed in the embryo and seed coat tissues of developing seeds. The protein accumulates only in seeds and only long after transcript accumulation becomes evident.</text>
</comment>
<comment type="developmental stage">
    <text evidence="3">Peak of expression in seeds between 3 and 28 days post-anthesis.</text>
</comment>
<comment type="domain">
    <text evidence="4">The BURP domain located at the C-terminus has not been identified in non-plant proteins.</text>
</comment>
<gene>
    <name evidence="5" type="primary">BNM2C</name>
    <name evidence="7" type="ordered locus">BnaC08g02980D</name>
    <name evidence="7" type="ORF">GSBRNA2T00127943001</name>
</gene>
<dbReference type="EMBL" id="FJ204001">
    <property type="protein sequence ID" value="ACO54862.1"/>
    <property type="molecule type" value="mRNA"/>
</dbReference>
<dbReference type="EMBL" id="FJ204002">
    <property type="protein sequence ID" value="ACO54863.1"/>
    <property type="molecule type" value="Genomic_DNA"/>
</dbReference>
<dbReference type="EMBL" id="LK031810">
    <property type="protein sequence ID" value="CDX77253.1"/>
    <property type="molecule type" value="Genomic_DNA"/>
</dbReference>
<dbReference type="RefSeq" id="NP_001302898.1">
    <property type="nucleotide sequence ID" value="NM_001315969.1"/>
</dbReference>
<dbReference type="SMR" id="D2CZZ9"/>
<dbReference type="STRING" id="3708.D2CZZ9"/>
<dbReference type="PaxDb" id="3708-D2CZZ9"/>
<dbReference type="EnsemblPlants" id="CDX77253">
    <property type="protein sequence ID" value="CDX77253"/>
    <property type="gene ID" value="GSBRNA2T00127943001"/>
</dbReference>
<dbReference type="GeneID" id="106419576"/>
<dbReference type="Gramene" id="CDX77253">
    <property type="protein sequence ID" value="CDX77253"/>
    <property type="gene ID" value="GSBRNA2T00127943001"/>
</dbReference>
<dbReference type="KEGG" id="bna:106419576"/>
<dbReference type="OMA" id="DNIVWVT"/>
<dbReference type="OrthoDB" id="1909293at2759"/>
<dbReference type="GO" id="GO:0000326">
    <property type="term" value="C:protein storage vacuole"/>
    <property type="evidence" value="ECO:0007669"/>
    <property type="project" value="UniProtKB-SubCell"/>
</dbReference>
<dbReference type="InterPro" id="IPR044816">
    <property type="entry name" value="BURP"/>
</dbReference>
<dbReference type="InterPro" id="IPR004873">
    <property type="entry name" value="BURP_dom"/>
</dbReference>
<dbReference type="PANTHER" id="PTHR31236">
    <property type="entry name" value="BURP DOMAIN PROTEIN USPL1-LIKE"/>
    <property type="match status" value="1"/>
</dbReference>
<dbReference type="PANTHER" id="PTHR31236:SF63">
    <property type="entry name" value="BURP DOMAIN-CONTAINING PROTEIN BNM2A"/>
    <property type="match status" value="1"/>
</dbReference>
<dbReference type="Pfam" id="PF03181">
    <property type="entry name" value="BURP"/>
    <property type="match status" value="1"/>
</dbReference>
<dbReference type="SMART" id="SM01045">
    <property type="entry name" value="BURP"/>
    <property type="match status" value="1"/>
</dbReference>
<dbReference type="PROSITE" id="PS51277">
    <property type="entry name" value="BURP"/>
    <property type="match status" value="1"/>
</dbReference>
<reference key="1">
    <citation type="journal article" date="2009" name="Plant Mol. Biol.">
        <title>Protein storage vacuoles of Brassica napus zygotic embryos accumulate a BURP domain protein and perturbation of its production distorts the PSV.</title>
        <authorList>
            <person name="Teerawanichpan P."/>
            <person name="Xia Q."/>
            <person name="Caldwell S.J."/>
            <person name="Datla R."/>
            <person name="Selvaraj G."/>
        </authorList>
    </citation>
    <scope>NUCLEOTIDE SEQUENCE [GENOMIC DNA / MRNA]</scope>
    <scope>TISSUE SPECIFICITY</scope>
    <scope>DEVELOPMENTAL STAGE</scope>
    <scope>SUBCELLULAR LOCATION</scope>
</reference>
<reference key="2">
    <citation type="journal article" date="2014" name="Science">
        <title>Plant genetics. Early allopolyploid evolution in the post-Neolithic Brassica napus oilseed genome.</title>
        <authorList>
            <person name="Chalhoub B."/>
            <person name="Denoeud F."/>
            <person name="Liu S."/>
            <person name="Parkin I.A."/>
            <person name="Tang H."/>
            <person name="Wang X."/>
            <person name="Chiquet J."/>
            <person name="Belcram H."/>
            <person name="Tong C."/>
            <person name="Samans B."/>
            <person name="Correa M."/>
            <person name="Da Silva C."/>
            <person name="Just J."/>
            <person name="Falentin C."/>
            <person name="Koh C.S."/>
            <person name="Le Clainche I."/>
            <person name="Bernard M."/>
            <person name="Bento P."/>
            <person name="Noel B."/>
            <person name="Labadie K."/>
            <person name="Alberti A."/>
            <person name="Charles M."/>
            <person name="Arnaud D."/>
            <person name="Guo H."/>
            <person name="Daviaud C."/>
            <person name="Alamery S."/>
            <person name="Jabbari K."/>
            <person name="Zhao M."/>
            <person name="Edger P.P."/>
            <person name="Chelaifa H."/>
            <person name="Tack D."/>
            <person name="Lassalle G."/>
            <person name="Mestiri I."/>
            <person name="Schnel N."/>
            <person name="Le Paslier M.C."/>
            <person name="Fan G."/>
            <person name="Renault V."/>
            <person name="Bayer P.E."/>
            <person name="Golicz A.A."/>
            <person name="Manoli S."/>
            <person name="Lee T.H."/>
            <person name="Thi V.H."/>
            <person name="Chalabi S."/>
            <person name="Hu Q."/>
            <person name="Fan C."/>
            <person name="Tollenaere R."/>
            <person name="Lu Y."/>
            <person name="Battail C."/>
            <person name="Shen J."/>
            <person name="Sidebottom C.H."/>
            <person name="Wang X."/>
            <person name="Canaguier A."/>
            <person name="Chauveau A."/>
            <person name="Berard A."/>
            <person name="Deniot G."/>
            <person name="Guan M."/>
            <person name="Liu Z."/>
            <person name="Sun F."/>
            <person name="Lim Y.P."/>
            <person name="Lyons E."/>
            <person name="Town C.D."/>
            <person name="Bancroft I."/>
            <person name="Wang X."/>
            <person name="Meng J."/>
            <person name="Ma J."/>
            <person name="Pires J.C."/>
            <person name="King G.J."/>
            <person name="Brunel D."/>
            <person name="Delourme R."/>
            <person name="Renard M."/>
            <person name="Aury J.M."/>
            <person name="Adams K.L."/>
            <person name="Batley J."/>
            <person name="Snowdon R.J."/>
            <person name="Tost J."/>
            <person name="Edwards D."/>
            <person name="Zhou Y."/>
            <person name="Hua W."/>
            <person name="Sharpe A.G."/>
            <person name="Paterson A.H."/>
            <person name="Guan C."/>
            <person name="Wincker P."/>
        </authorList>
    </citation>
    <scope>NUCLEOTIDE SEQUENCE [LARGE SCALE GENOMIC DNA]</scope>
    <source>
        <strain>cv. Darmor-bzh</strain>
    </source>
</reference>
<reference key="3">
    <citation type="journal article" date="1998" name="Mol. Gen. Genet.">
        <title>A conserved BURP domain defines a novel group of plant proteins with unusual primary structures.</title>
        <authorList>
            <person name="Hattori J."/>
            <person name="Boutilier K.A."/>
            <person name="van Lookeren Campagne M.M."/>
            <person name="Miki B.L."/>
        </authorList>
    </citation>
    <scope>DOMAIN</scope>
</reference>
<organism evidence="6">
    <name type="scientific">Brassica napus</name>
    <name type="common">Rape</name>
    <dbReference type="NCBI Taxonomy" id="3708"/>
    <lineage>
        <taxon>Eukaryota</taxon>
        <taxon>Viridiplantae</taxon>
        <taxon>Streptophyta</taxon>
        <taxon>Embryophyta</taxon>
        <taxon>Tracheophyta</taxon>
        <taxon>Spermatophyta</taxon>
        <taxon>Magnoliopsida</taxon>
        <taxon>eudicotyledons</taxon>
        <taxon>Gunneridae</taxon>
        <taxon>Pentapetalae</taxon>
        <taxon>rosids</taxon>
        <taxon>malvids</taxon>
        <taxon>Brassicales</taxon>
        <taxon>Brassicaceae</taxon>
        <taxon>Brassiceae</taxon>
        <taxon>Brassica</taxon>
    </lineage>
</organism>